<protein>
    <recommendedName>
        <fullName evidence="1">Ketol-acid reductoisomerase (NADP(+))</fullName>
        <shortName evidence="1">KARI</shortName>
        <ecNumber evidence="1">1.1.1.86</ecNumber>
    </recommendedName>
    <alternativeName>
        <fullName evidence="1">Acetohydroxy-acid isomeroreductase</fullName>
        <shortName evidence="1">AHIR</shortName>
    </alternativeName>
    <alternativeName>
        <fullName evidence="1">Alpha-keto-beta-hydroxylacyl reductoisomerase</fullName>
    </alternativeName>
    <alternativeName>
        <fullName evidence="1">Ketol-acid reductoisomerase type 2</fullName>
    </alternativeName>
    <alternativeName>
        <fullName evidence="1">Ketol-acid reductoisomerase type II</fullName>
    </alternativeName>
</protein>
<name>ILVC_ERWT9</name>
<feature type="chain" id="PRO_1000190952" description="Ketol-acid reductoisomerase (NADP(+))">
    <location>
        <begin position="1"/>
        <end position="492"/>
    </location>
</feature>
<feature type="domain" description="KARI N-terminal Rossmann" evidence="2">
    <location>
        <begin position="15"/>
        <end position="208"/>
    </location>
</feature>
<feature type="domain" description="KARI C-terminal knotted 1" evidence="3">
    <location>
        <begin position="209"/>
        <end position="344"/>
    </location>
</feature>
<feature type="domain" description="KARI C-terminal knotted 2" evidence="3">
    <location>
        <begin position="345"/>
        <end position="485"/>
    </location>
</feature>
<feature type="active site" evidence="1">
    <location>
        <position position="132"/>
    </location>
</feature>
<feature type="binding site" evidence="1">
    <location>
        <begin position="45"/>
        <end position="48"/>
    </location>
    <ligand>
        <name>NADP(+)</name>
        <dbReference type="ChEBI" id="CHEBI:58349"/>
    </ligand>
</feature>
<feature type="binding site" evidence="1">
    <location>
        <position position="68"/>
    </location>
    <ligand>
        <name>NADP(+)</name>
        <dbReference type="ChEBI" id="CHEBI:58349"/>
    </ligand>
</feature>
<feature type="binding site" evidence="1">
    <location>
        <position position="76"/>
    </location>
    <ligand>
        <name>NADP(+)</name>
        <dbReference type="ChEBI" id="CHEBI:58349"/>
    </ligand>
</feature>
<feature type="binding site" evidence="1">
    <location>
        <position position="78"/>
    </location>
    <ligand>
        <name>NADP(+)</name>
        <dbReference type="ChEBI" id="CHEBI:58349"/>
    </ligand>
</feature>
<feature type="binding site" evidence="1">
    <location>
        <begin position="108"/>
        <end position="110"/>
    </location>
    <ligand>
        <name>NADP(+)</name>
        <dbReference type="ChEBI" id="CHEBI:58349"/>
    </ligand>
</feature>
<feature type="binding site" evidence="1">
    <location>
        <position position="158"/>
    </location>
    <ligand>
        <name>NADP(+)</name>
        <dbReference type="ChEBI" id="CHEBI:58349"/>
    </ligand>
</feature>
<feature type="binding site" evidence="1">
    <location>
        <position position="217"/>
    </location>
    <ligand>
        <name>Mg(2+)</name>
        <dbReference type="ChEBI" id="CHEBI:18420"/>
        <label>1</label>
    </ligand>
</feature>
<feature type="binding site" evidence="1">
    <location>
        <position position="217"/>
    </location>
    <ligand>
        <name>Mg(2+)</name>
        <dbReference type="ChEBI" id="CHEBI:18420"/>
        <label>2</label>
    </ligand>
</feature>
<feature type="binding site" evidence="1">
    <location>
        <position position="221"/>
    </location>
    <ligand>
        <name>Mg(2+)</name>
        <dbReference type="ChEBI" id="CHEBI:18420"/>
        <label>1</label>
    </ligand>
</feature>
<feature type="binding site" evidence="1">
    <location>
        <position position="389"/>
    </location>
    <ligand>
        <name>Mg(2+)</name>
        <dbReference type="ChEBI" id="CHEBI:18420"/>
        <label>2</label>
    </ligand>
</feature>
<feature type="binding site" evidence="1">
    <location>
        <position position="393"/>
    </location>
    <ligand>
        <name>Mg(2+)</name>
        <dbReference type="ChEBI" id="CHEBI:18420"/>
        <label>2</label>
    </ligand>
</feature>
<feature type="binding site" evidence="1">
    <location>
        <position position="414"/>
    </location>
    <ligand>
        <name>substrate</name>
    </ligand>
</feature>
<comment type="function">
    <text evidence="1">Involved in the biosynthesis of branched-chain amino acids (BCAA). Catalyzes an alkyl-migration followed by a ketol-acid reduction of (S)-2-acetolactate (S2AL) to yield (R)-2,3-dihydroxy-isovalerate. In the isomerase reaction, S2AL is rearranged via a Mg-dependent methyl migration to produce 3-hydroxy-3-methyl-2-ketobutyrate (HMKB). In the reductase reaction, this 2-ketoacid undergoes a metal-dependent reduction by NADPH to yield (R)-2,3-dihydroxy-isovalerate.</text>
</comment>
<comment type="catalytic activity">
    <reaction evidence="1">
        <text>(2R)-2,3-dihydroxy-3-methylbutanoate + NADP(+) = (2S)-2-acetolactate + NADPH + H(+)</text>
        <dbReference type="Rhea" id="RHEA:22068"/>
        <dbReference type="ChEBI" id="CHEBI:15378"/>
        <dbReference type="ChEBI" id="CHEBI:49072"/>
        <dbReference type="ChEBI" id="CHEBI:57783"/>
        <dbReference type="ChEBI" id="CHEBI:58349"/>
        <dbReference type="ChEBI" id="CHEBI:58476"/>
        <dbReference type="EC" id="1.1.1.86"/>
    </reaction>
</comment>
<comment type="catalytic activity">
    <reaction evidence="1">
        <text>(2R,3R)-2,3-dihydroxy-3-methylpentanoate + NADP(+) = (S)-2-ethyl-2-hydroxy-3-oxobutanoate + NADPH + H(+)</text>
        <dbReference type="Rhea" id="RHEA:13493"/>
        <dbReference type="ChEBI" id="CHEBI:15378"/>
        <dbReference type="ChEBI" id="CHEBI:49256"/>
        <dbReference type="ChEBI" id="CHEBI:49258"/>
        <dbReference type="ChEBI" id="CHEBI:57783"/>
        <dbReference type="ChEBI" id="CHEBI:58349"/>
        <dbReference type="EC" id="1.1.1.86"/>
    </reaction>
</comment>
<comment type="cofactor">
    <cofactor evidence="1">
        <name>Mg(2+)</name>
        <dbReference type="ChEBI" id="CHEBI:18420"/>
    </cofactor>
    <text evidence="1">Binds 2 magnesium ions per subunit.</text>
</comment>
<comment type="pathway">
    <text evidence="1">Amino-acid biosynthesis; L-isoleucine biosynthesis; L-isoleucine from 2-oxobutanoate: step 2/4.</text>
</comment>
<comment type="pathway">
    <text evidence="1">Amino-acid biosynthesis; L-valine biosynthesis; L-valine from pyruvate: step 2/4.</text>
</comment>
<comment type="similarity">
    <text evidence="1">Belongs to the ketol-acid reductoisomerase family.</text>
</comment>
<dbReference type="EC" id="1.1.1.86" evidence="1"/>
<dbReference type="EMBL" id="CU468135">
    <property type="protein sequence ID" value="CAO95236.1"/>
    <property type="molecule type" value="Genomic_DNA"/>
</dbReference>
<dbReference type="RefSeq" id="WP_012439956.1">
    <property type="nucleotide sequence ID" value="NC_010694.1"/>
</dbReference>
<dbReference type="SMR" id="B2VG69"/>
<dbReference type="STRING" id="465817.ETA_01900"/>
<dbReference type="KEGG" id="eta:ETA_01900"/>
<dbReference type="eggNOG" id="COG0059">
    <property type="taxonomic scope" value="Bacteria"/>
</dbReference>
<dbReference type="HOGENOM" id="CLU_551905_0_0_6"/>
<dbReference type="OrthoDB" id="9804088at2"/>
<dbReference type="UniPathway" id="UPA00047">
    <property type="reaction ID" value="UER00056"/>
</dbReference>
<dbReference type="UniPathway" id="UPA00049">
    <property type="reaction ID" value="UER00060"/>
</dbReference>
<dbReference type="Proteomes" id="UP000001726">
    <property type="component" value="Chromosome"/>
</dbReference>
<dbReference type="GO" id="GO:0005829">
    <property type="term" value="C:cytosol"/>
    <property type="evidence" value="ECO:0007669"/>
    <property type="project" value="TreeGrafter"/>
</dbReference>
<dbReference type="GO" id="GO:0004455">
    <property type="term" value="F:ketol-acid reductoisomerase activity"/>
    <property type="evidence" value="ECO:0007669"/>
    <property type="project" value="UniProtKB-UniRule"/>
</dbReference>
<dbReference type="GO" id="GO:0000287">
    <property type="term" value="F:magnesium ion binding"/>
    <property type="evidence" value="ECO:0007669"/>
    <property type="project" value="UniProtKB-UniRule"/>
</dbReference>
<dbReference type="GO" id="GO:0009097">
    <property type="term" value="P:isoleucine biosynthetic process"/>
    <property type="evidence" value="ECO:0007669"/>
    <property type="project" value="UniProtKB-UniRule"/>
</dbReference>
<dbReference type="GO" id="GO:0009099">
    <property type="term" value="P:L-valine biosynthetic process"/>
    <property type="evidence" value="ECO:0007669"/>
    <property type="project" value="UniProtKB-UniRule"/>
</dbReference>
<dbReference type="FunFam" id="1.10.1040.10:FF:000007">
    <property type="entry name" value="Ketol-acid reductoisomerase (NADP(+))"/>
    <property type="match status" value="1"/>
</dbReference>
<dbReference type="FunFam" id="3.40.50.720:FF:000043">
    <property type="entry name" value="Ketol-acid reductoisomerase (NADP(+))"/>
    <property type="match status" value="1"/>
</dbReference>
<dbReference type="Gene3D" id="1.10.1040.10">
    <property type="entry name" value="N-(1-d-carboxylethyl)-l-norvaline Dehydrogenase, domain 2"/>
    <property type="match status" value="1"/>
</dbReference>
<dbReference type="Gene3D" id="3.40.50.720">
    <property type="entry name" value="NAD(P)-binding Rossmann-like Domain"/>
    <property type="match status" value="1"/>
</dbReference>
<dbReference type="HAMAP" id="MF_00435">
    <property type="entry name" value="IlvC"/>
    <property type="match status" value="1"/>
</dbReference>
<dbReference type="InterPro" id="IPR008927">
    <property type="entry name" value="6-PGluconate_DH-like_C_sf"/>
</dbReference>
<dbReference type="InterPro" id="IPR013328">
    <property type="entry name" value="6PGD_dom2"/>
</dbReference>
<dbReference type="InterPro" id="IPR013023">
    <property type="entry name" value="KARI"/>
</dbReference>
<dbReference type="InterPro" id="IPR000506">
    <property type="entry name" value="KARI_C"/>
</dbReference>
<dbReference type="InterPro" id="IPR013116">
    <property type="entry name" value="KARI_N"/>
</dbReference>
<dbReference type="InterPro" id="IPR036291">
    <property type="entry name" value="NAD(P)-bd_dom_sf"/>
</dbReference>
<dbReference type="NCBIfam" id="TIGR00465">
    <property type="entry name" value="ilvC"/>
    <property type="match status" value="1"/>
</dbReference>
<dbReference type="NCBIfam" id="NF003557">
    <property type="entry name" value="PRK05225.1"/>
    <property type="match status" value="1"/>
</dbReference>
<dbReference type="PANTHER" id="PTHR21371">
    <property type="entry name" value="KETOL-ACID REDUCTOISOMERASE, MITOCHONDRIAL"/>
    <property type="match status" value="1"/>
</dbReference>
<dbReference type="PANTHER" id="PTHR21371:SF1">
    <property type="entry name" value="KETOL-ACID REDUCTOISOMERASE, MITOCHONDRIAL"/>
    <property type="match status" value="1"/>
</dbReference>
<dbReference type="Pfam" id="PF01450">
    <property type="entry name" value="KARI_C"/>
    <property type="match status" value="2"/>
</dbReference>
<dbReference type="Pfam" id="PF07991">
    <property type="entry name" value="KARI_N"/>
    <property type="match status" value="1"/>
</dbReference>
<dbReference type="SUPFAM" id="SSF48179">
    <property type="entry name" value="6-phosphogluconate dehydrogenase C-terminal domain-like"/>
    <property type="match status" value="2"/>
</dbReference>
<dbReference type="SUPFAM" id="SSF51735">
    <property type="entry name" value="NAD(P)-binding Rossmann-fold domains"/>
    <property type="match status" value="1"/>
</dbReference>
<dbReference type="PROSITE" id="PS51851">
    <property type="entry name" value="KARI_C"/>
    <property type="match status" value="2"/>
</dbReference>
<dbReference type="PROSITE" id="PS51850">
    <property type="entry name" value="KARI_N"/>
    <property type="match status" value="1"/>
</dbReference>
<gene>
    <name evidence="1" type="primary">ilvC</name>
    <name type="ordered locus">ETA_01900</name>
</gene>
<evidence type="ECO:0000255" key="1">
    <source>
        <dbReference type="HAMAP-Rule" id="MF_00435"/>
    </source>
</evidence>
<evidence type="ECO:0000255" key="2">
    <source>
        <dbReference type="PROSITE-ProRule" id="PRU01197"/>
    </source>
</evidence>
<evidence type="ECO:0000255" key="3">
    <source>
        <dbReference type="PROSITE-ProRule" id="PRU01198"/>
    </source>
</evidence>
<proteinExistence type="inferred from homology"/>
<accession>B2VG69</accession>
<sequence length="492" mass="53904">MANYFNTLNLRNQLAQLGKCRFMAREEFADEASYLKGKKVVIVGCGAQGLNQGLNMRDSGLDIAYALRAEAIAEKRASWRKATENGFKVGTYEELIPQADLVVNLTPDKQHTSVVQAVQPLMKDGAALGYSHGFNIVEVGEQVRKDVTVVMVAPKCPGTEVREEYKRGFGVPTLIAVHPENDPKGEGMAIAKAWAAATGGHRAGVLESSFVAEVKSDLMGEQTILCGMLQAGSLLCFDKLVAEGTDAAYAEKLIQFGWETITEALKQGGITLMMDRLSNPAKVRAYALSEQLKTIMAPLFQKHMDDIISGEFSSGMMADWANDDKKLLGWREETGKTAFETAAQFEGKIGEQDYFDQGVVMIAMVKAGVELAFETMVAAGIVEESAYYESLHELPLIANTIARKRLYEMNVVISDTAEYGNYLFSYAAVPLLQEFMTTLQAGDLGKQAQTSTSVDNAQLRDVNEAIRHHDIETVGRKLRGYMTDMKRIAVAG</sequence>
<keyword id="KW-0028">Amino-acid biosynthesis</keyword>
<keyword id="KW-0100">Branched-chain amino acid biosynthesis</keyword>
<keyword id="KW-0460">Magnesium</keyword>
<keyword id="KW-0479">Metal-binding</keyword>
<keyword id="KW-0521">NADP</keyword>
<keyword id="KW-0560">Oxidoreductase</keyword>
<keyword id="KW-1185">Reference proteome</keyword>
<keyword id="KW-0677">Repeat</keyword>
<reference key="1">
    <citation type="journal article" date="2008" name="Environ. Microbiol.">
        <title>The genome of Erwinia tasmaniensis strain Et1/99, a non-pathogenic bacterium in the genus Erwinia.</title>
        <authorList>
            <person name="Kube M."/>
            <person name="Migdoll A.M."/>
            <person name="Mueller I."/>
            <person name="Kuhl H."/>
            <person name="Beck A."/>
            <person name="Reinhardt R."/>
            <person name="Geider K."/>
        </authorList>
    </citation>
    <scope>NUCLEOTIDE SEQUENCE [LARGE SCALE GENOMIC DNA]</scope>
    <source>
        <strain>DSM 17950 / CFBP 7177 / CIP 109463 / NCPPB 4357 / Et1/99</strain>
    </source>
</reference>
<organism>
    <name type="scientific">Erwinia tasmaniensis (strain DSM 17950 / CFBP 7177 / CIP 109463 / NCPPB 4357 / Et1/99)</name>
    <dbReference type="NCBI Taxonomy" id="465817"/>
    <lineage>
        <taxon>Bacteria</taxon>
        <taxon>Pseudomonadati</taxon>
        <taxon>Pseudomonadota</taxon>
        <taxon>Gammaproteobacteria</taxon>
        <taxon>Enterobacterales</taxon>
        <taxon>Erwiniaceae</taxon>
        <taxon>Erwinia</taxon>
    </lineage>
</organism>